<keyword id="KW-0903">Direct protein sequencing</keyword>
<keyword id="KW-1015">Disulfide bond</keyword>
<keyword id="KW-0872">Ion channel impairing toxin</keyword>
<keyword id="KW-0528">Neurotoxin</keyword>
<keyword id="KW-0964">Secreted</keyword>
<keyword id="KW-0732">Signal</keyword>
<keyword id="KW-0800">Toxin</keyword>
<keyword id="KW-0738">Voltage-gated sodium channel impairing toxin</keyword>
<dbReference type="EMBL" id="MK132975">
    <property type="protein sequence ID" value="QGW48893.1"/>
    <property type="molecule type" value="mRNA"/>
</dbReference>
<dbReference type="GO" id="GO:0005576">
    <property type="term" value="C:extracellular region"/>
    <property type="evidence" value="ECO:0007669"/>
    <property type="project" value="UniProtKB-SubCell"/>
</dbReference>
<dbReference type="GO" id="GO:0019871">
    <property type="term" value="F:sodium channel inhibitor activity"/>
    <property type="evidence" value="ECO:0007669"/>
    <property type="project" value="InterPro"/>
</dbReference>
<dbReference type="GO" id="GO:0090729">
    <property type="term" value="F:toxin activity"/>
    <property type="evidence" value="ECO:0007669"/>
    <property type="project" value="UniProtKB-KW"/>
</dbReference>
<dbReference type="GO" id="GO:0006952">
    <property type="term" value="P:defense response"/>
    <property type="evidence" value="ECO:0007669"/>
    <property type="project" value="InterPro"/>
</dbReference>
<dbReference type="CDD" id="cd23106">
    <property type="entry name" value="neurotoxins_LC_scorpion"/>
    <property type="match status" value="1"/>
</dbReference>
<dbReference type="FunFam" id="3.30.30.10:FF:000002">
    <property type="entry name" value="Alpha-like toxin BmK-M1"/>
    <property type="match status" value="1"/>
</dbReference>
<dbReference type="Gene3D" id="3.30.30.10">
    <property type="entry name" value="Knottin, scorpion toxin-like"/>
    <property type="match status" value="1"/>
</dbReference>
<dbReference type="InterPro" id="IPR044062">
    <property type="entry name" value="LCN-type_CS_alpha_beta_dom"/>
</dbReference>
<dbReference type="InterPro" id="IPR003614">
    <property type="entry name" value="Scorpion_toxin-like"/>
</dbReference>
<dbReference type="InterPro" id="IPR036574">
    <property type="entry name" value="Scorpion_toxin-like_sf"/>
</dbReference>
<dbReference type="InterPro" id="IPR018218">
    <property type="entry name" value="Scorpion_toxinL"/>
</dbReference>
<dbReference type="InterPro" id="IPR002061">
    <property type="entry name" value="Scorpion_toxinL/defensin"/>
</dbReference>
<dbReference type="Pfam" id="PF00537">
    <property type="entry name" value="Toxin_3"/>
    <property type="match status" value="1"/>
</dbReference>
<dbReference type="PRINTS" id="PR00285">
    <property type="entry name" value="SCORPNTOXIN"/>
</dbReference>
<dbReference type="SMART" id="SM00505">
    <property type="entry name" value="Knot1"/>
    <property type="match status" value="1"/>
</dbReference>
<dbReference type="SUPFAM" id="SSF57095">
    <property type="entry name" value="Scorpion toxin-like"/>
    <property type="match status" value="1"/>
</dbReference>
<dbReference type="PROSITE" id="PS51863">
    <property type="entry name" value="LCN_CSAB"/>
    <property type="match status" value="1"/>
</dbReference>
<comment type="function">
    <text evidence="1">Beta toxins bind voltage-independently at site-4 of sodium channels (Nav) and shift the voltage of activation toward more negative potentials thereby affecting sodium channel activation and promoting spontaneous and repetitive firing.</text>
</comment>
<comment type="subcellular location">
    <subcellularLocation>
        <location evidence="4 5">Secreted</location>
    </subcellularLocation>
</comment>
<comment type="tissue specificity">
    <text evidence="8 9">Expressed by the venom gland.</text>
</comment>
<comment type="domain">
    <text evidence="7">Has the structural arrangement of an alpha-helix connected to antiparallel beta-sheets by disulfide bonds (CS-alpha/beta).</text>
</comment>
<comment type="mass spectrometry" mass="7402.8" method="MALDI" evidence="5"/>
<comment type="mass spectrometry" mass="7066.0" method="Electrospray" evidence="4"/>
<comment type="similarity">
    <text evidence="7">Belongs to the long (4 C-C) scorpion toxin superfamily. Sodium channel inhibitor family. Beta subfamily.</text>
</comment>
<name>SCXS_TITPA</name>
<organism>
    <name type="scientific">Tityus pachyurus</name>
    <name type="common">Colombian scorpion</name>
    <dbReference type="NCBI Taxonomy" id="288781"/>
    <lineage>
        <taxon>Eukaryota</taxon>
        <taxon>Metazoa</taxon>
        <taxon>Ecdysozoa</taxon>
        <taxon>Arthropoda</taxon>
        <taxon>Chelicerata</taxon>
        <taxon>Arachnida</taxon>
        <taxon>Scorpiones</taxon>
        <taxon>Buthida</taxon>
        <taxon>Buthoidea</taxon>
        <taxon>Buthidae</taxon>
        <taxon>Tityus</taxon>
    </lineage>
</organism>
<reference evidence="10" key="1">
    <citation type="journal article" date="2020" name="Acta Trop.">
        <title>Venom diversity in the Neotropical scorpion genus Tityus: Implications for antivenom design emerging from molecular and immunochemical analyses across endemic areas of scorpionism.</title>
        <authorList>
            <person name="Borges A."/>
            <person name="Lomonte B."/>
            <person name="Angulo Y."/>
            <person name="Acosta de Patino H."/>
            <person name="Pascale J.M."/>
            <person name="Otero R."/>
            <person name="Miranda R.J."/>
            <person name="De Sousa L."/>
            <person name="Graham M.R."/>
            <person name="Gomez A."/>
            <person name="Pardal P.P.O."/>
            <person name="Ishikawa E."/>
            <person name="Bonilla F."/>
            <person name="Castillo A."/>
            <person name="de Avila R.A.M."/>
            <person name="Gomez J.P."/>
            <person name="Caro-Lopez J.A."/>
        </authorList>
    </citation>
    <scope>NUCLEOTIDE SEQUENCE [MRNA]</scope>
    <scope>MASS SPECTROMETRY</scope>
    <scope>SUBCELLULAR LOCATION</scope>
    <source>
        <tissue>Venom</tissue>
    </source>
</reference>
<reference key="2">
    <citation type="journal article" date="2006" name="Biochim. Biophys. Acta">
        <title>Proteomic analysis of the venom and characterization of toxins specific for Na+ - and K+ -channels from the Colombian scorpion Tityus pachyurus.</title>
        <authorList>
            <person name="Barona J."/>
            <person name="Batista C.V.F."/>
            <person name="Zamudio F.Z."/>
            <person name="Gomez-Lagunas F."/>
            <person name="Wanke E."/>
            <person name="Otero R."/>
            <person name="Possani L.D."/>
        </authorList>
    </citation>
    <scope>PROTEIN SEQUENCE OF 8-45</scope>
    <scope>SUBCELLULAR LOCATION</scope>
    <scope>MASS SPECTROMETRY</scope>
    <source>
        <tissue>Venom</tissue>
    </source>
</reference>
<sequence length="72" mass="8382">IDMVVECNKDGYLMEHDGCKLSCLMKKGTFCAEECQRMKGKDGYCYAWLACYCYNMPDWVKTWSRATNRCGK</sequence>
<protein>
    <recommendedName>
        <fullName>Putative beta-neurotoxin</fullName>
    </recommendedName>
    <alternativeName>
        <fullName evidence="6">Neurotoxin TpaP7</fullName>
    </alternativeName>
</protein>
<feature type="signal peptide" evidence="2">
    <location>
        <begin position="1" status="less than"/>
        <end position="7"/>
    </location>
</feature>
<feature type="chain" id="PRO_0000422255" description="Putative beta-neurotoxin">
    <location>
        <begin position="8"/>
        <end position="70"/>
    </location>
</feature>
<feature type="domain" description="LCN-type CS-alpha/beta" evidence="3">
    <location>
        <begin position="9"/>
        <end position="71"/>
    </location>
</feature>
<feature type="disulfide bond" evidence="3">
    <location>
        <begin position="19"/>
        <end position="70"/>
    </location>
</feature>
<feature type="disulfide bond" evidence="3">
    <location>
        <begin position="23"/>
        <end position="45"/>
    </location>
</feature>
<feature type="disulfide bond" evidence="3">
    <location>
        <begin position="31"/>
        <end position="51"/>
    </location>
</feature>
<feature type="disulfide bond" evidence="3">
    <location>
        <begin position="35"/>
        <end position="53"/>
    </location>
</feature>
<feature type="sequence conflict" description="In Ref. 2; AA sequence." evidence="7" ref="2">
    <original>QRM</original>
    <variation>ARL</variation>
    <location>
        <begin position="36"/>
        <end position="38"/>
    </location>
</feature>
<feature type="non-terminal residue" evidence="7">
    <location>
        <position position="1"/>
    </location>
</feature>
<evidence type="ECO:0000250" key="1"/>
<evidence type="ECO:0000250" key="2">
    <source>
        <dbReference type="UniProtKB" id="P60215"/>
    </source>
</evidence>
<evidence type="ECO:0000255" key="3">
    <source>
        <dbReference type="PROSITE-ProRule" id="PRU01210"/>
    </source>
</evidence>
<evidence type="ECO:0000269" key="4">
    <source>
    </source>
</evidence>
<evidence type="ECO:0000269" key="5">
    <source>
    </source>
</evidence>
<evidence type="ECO:0000303" key="6">
    <source>
    </source>
</evidence>
<evidence type="ECO:0000305" key="7"/>
<evidence type="ECO:0000305" key="8">
    <source>
    </source>
</evidence>
<evidence type="ECO:0000305" key="9">
    <source>
    </source>
</evidence>
<evidence type="ECO:0000312" key="10">
    <source>
        <dbReference type="EMBL" id="QGW48893.1"/>
    </source>
</evidence>
<accession>P0DL23</accession>
<accession>A0A7L4XS97</accession>
<proteinExistence type="evidence at protein level"/>